<evidence type="ECO:0000255" key="1">
    <source>
        <dbReference type="HAMAP-Rule" id="MF_00238"/>
    </source>
</evidence>
<organism>
    <name type="scientific">Bacillus cytotoxicus (strain DSM 22905 / CIP 110041 / 391-98 / NVH 391-98)</name>
    <dbReference type="NCBI Taxonomy" id="315749"/>
    <lineage>
        <taxon>Bacteria</taxon>
        <taxon>Bacillati</taxon>
        <taxon>Bacillota</taxon>
        <taxon>Bacilli</taxon>
        <taxon>Bacillales</taxon>
        <taxon>Bacillaceae</taxon>
        <taxon>Bacillus</taxon>
        <taxon>Bacillus cereus group</taxon>
    </lineage>
</organism>
<name>KCY_BACCN</name>
<accession>A7GN34</accession>
<gene>
    <name evidence="1" type="primary">cmk</name>
    <name type="ordered locus">Bcer98_1220</name>
</gene>
<keyword id="KW-0067">ATP-binding</keyword>
<keyword id="KW-0963">Cytoplasm</keyword>
<keyword id="KW-0418">Kinase</keyword>
<keyword id="KW-0547">Nucleotide-binding</keyword>
<keyword id="KW-0808">Transferase</keyword>
<dbReference type="EC" id="2.7.4.25" evidence="1"/>
<dbReference type="EMBL" id="CP000764">
    <property type="protein sequence ID" value="ABS21542.1"/>
    <property type="molecule type" value="Genomic_DNA"/>
</dbReference>
<dbReference type="RefSeq" id="WP_011984295.1">
    <property type="nucleotide sequence ID" value="NC_009674.1"/>
</dbReference>
<dbReference type="SMR" id="A7GN34"/>
<dbReference type="STRING" id="315749.Bcer98_1220"/>
<dbReference type="GeneID" id="33896570"/>
<dbReference type="KEGG" id="bcy:Bcer98_1220"/>
<dbReference type="eggNOG" id="COG0283">
    <property type="taxonomic scope" value="Bacteria"/>
</dbReference>
<dbReference type="HOGENOM" id="CLU_079959_0_2_9"/>
<dbReference type="OrthoDB" id="9807434at2"/>
<dbReference type="Proteomes" id="UP000002300">
    <property type="component" value="Chromosome"/>
</dbReference>
<dbReference type="GO" id="GO:0005829">
    <property type="term" value="C:cytosol"/>
    <property type="evidence" value="ECO:0007669"/>
    <property type="project" value="TreeGrafter"/>
</dbReference>
<dbReference type="GO" id="GO:0005524">
    <property type="term" value="F:ATP binding"/>
    <property type="evidence" value="ECO:0007669"/>
    <property type="project" value="UniProtKB-UniRule"/>
</dbReference>
<dbReference type="GO" id="GO:0036430">
    <property type="term" value="F:CMP kinase activity"/>
    <property type="evidence" value="ECO:0007669"/>
    <property type="project" value="RHEA"/>
</dbReference>
<dbReference type="GO" id="GO:0036431">
    <property type="term" value="F:dCMP kinase activity"/>
    <property type="evidence" value="ECO:0007669"/>
    <property type="project" value="RHEA"/>
</dbReference>
<dbReference type="GO" id="GO:0015949">
    <property type="term" value="P:nucleobase-containing small molecule interconversion"/>
    <property type="evidence" value="ECO:0007669"/>
    <property type="project" value="TreeGrafter"/>
</dbReference>
<dbReference type="GO" id="GO:0006220">
    <property type="term" value="P:pyrimidine nucleotide metabolic process"/>
    <property type="evidence" value="ECO:0007669"/>
    <property type="project" value="UniProtKB-UniRule"/>
</dbReference>
<dbReference type="CDD" id="cd02020">
    <property type="entry name" value="CMPK"/>
    <property type="match status" value="1"/>
</dbReference>
<dbReference type="FunFam" id="3.40.50.300:FF:000484">
    <property type="entry name" value="Cytidylate kinase"/>
    <property type="match status" value="1"/>
</dbReference>
<dbReference type="Gene3D" id="3.40.50.300">
    <property type="entry name" value="P-loop containing nucleotide triphosphate hydrolases"/>
    <property type="match status" value="1"/>
</dbReference>
<dbReference type="HAMAP" id="MF_00238">
    <property type="entry name" value="Cytidyl_kinase_type1"/>
    <property type="match status" value="1"/>
</dbReference>
<dbReference type="InterPro" id="IPR003136">
    <property type="entry name" value="Cytidylate_kin"/>
</dbReference>
<dbReference type="InterPro" id="IPR011994">
    <property type="entry name" value="Cytidylate_kinase_dom"/>
</dbReference>
<dbReference type="InterPro" id="IPR027417">
    <property type="entry name" value="P-loop_NTPase"/>
</dbReference>
<dbReference type="NCBIfam" id="TIGR00017">
    <property type="entry name" value="cmk"/>
    <property type="match status" value="1"/>
</dbReference>
<dbReference type="PANTHER" id="PTHR21299:SF2">
    <property type="entry name" value="CYTIDYLATE KINASE"/>
    <property type="match status" value="1"/>
</dbReference>
<dbReference type="PANTHER" id="PTHR21299">
    <property type="entry name" value="CYTIDYLATE KINASE/PANTOATE-BETA-ALANINE LIGASE"/>
    <property type="match status" value="1"/>
</dbReference>
<dbReference type="Pfam" id="PF02224">
    <property type="entry name" value="Cytidylate_kin"/>
    <property type="match status" value="1"/>
</dbReference>
<dbReference type="SUPFAM" id="SSF52540">
    <property type="entry name" value="P-loop containing nucleoside triphosphate hydrolases"/>
    <property type="match status" value="1"/>
</dbReference>
<sequence>MDKRISIAIDGPAAAGKSTVAKVVAKQLSYVYIDTGAMYRTLTYAALEQNIDIENEEKLMEVLQSIRIEFQQGKDTQQVFLNGQDVSEVIRTPDVTNRVSIVAKHRLVREEMVRRQQELAAQGGVVMDGRDIGTHVLPNAEVKIFMLASVEERAERRHLENMRKGFSSNLEQLKKEIAQRDKLDSEREVSPLKKAEDAFELDTTSLSIEEVVRNIMAIVSEALQK</sequence>
<feature type="chain" id="PRO_1000078330" description="Cytidylate kinase">
    <location>
        <begin position="1"/>
        <end position="225"/>
    </location>
</feature>
<feature type="binding site" evidence="1">
    <location>
        <begin position="11"/>
        <end position="19"/>
    </location>
    <ligand>
        <name>ATP</name>
        <dbReference type="ChEBI" id="CHEBI:30616"/>
    </ligand>
</feature>
<proteinExistence type="inferred from homology"/>
<protein>
    <recommendedName>
        <fullName evidence="1">Cytidylate kinase</fullName>
        <shortName evidence="1">CK</shortName>
        <ecNumber evidence="1">2.7.4.25</ecNumber>
    </recommendedName>
    <alternativeName>
        <fullName evidence="1">Cytidine monophosphate kinase</fullName>
        <shortName evidence="1">CMP kinase</shortName>
    </alternativeName>
</protein>
<reference key="1">
    <citation type="journal article" date="2008" name="Chem. Biol. Interact.">
        <title>Extending the Bacillus cereus group genomics to putative food-borne pathogens of different toxicity.</title>
        <authorList>
            <person name="Lapidus A."/>
            <person name="Goltsman E."/>
            <person name="Auger S."/>
            <person name="Galleron N."/>
            <person name="Segurens B."/>
            <person name="Dossat C."/>
            <person name="Land M.L."/>
            <person name="Broussolle V."/>
            <person name="Brillard J."/>
            <person name="Guinebretiere M.-H."/>
            <person name="Sanchis V."/>
            <person name="Nguen-the C."/>
            <person name="Lereclus D."/>
            <person name="Richardson P."/>
            <person name="Wincker P."/>
            <person name="Weissenbach J."/>
            <person name="Ehrlich S.D."/>
            <person name="Sorokin A."/>
        </authorList>
    </citation>
    <scope>NUCLEOTIDE SEQUENCE [LARGE SCALE GENOMIC DNA]</scope>
    <source>
        <strain>DSM 22905 / CIP 110041 / 391-98 / NVH 391-98</strain>
    </source>
</reference>
<comment type="catalytic activity">
    <reaction evidence="1">
        <text>CMP + ATP = CDP + ADP</text>
        <dbReference type="Rhea" id="RHEA:11600"/>
        <dbReference type="ChEBI" id="CHEBI:30616"/>
        <dbReference type="ChEBI" id="CHEBI:58069"/>
        <dbReference type="ChEBI" id="CHEBI:60377"/>
        <dbReference type="ChEBI" id="CHEBI:456216"/>
        <dbReference type="EC" id="2.7.4.25"/>
    </reaction>
</comment>
<comment type="catalytic activity">
    <reaction evidence="1">
        <text>dCMP + ATP = dCDP + ADP</text>
        <dbReference type="Rhea" id="RHEA:25094"/>
        <dbReference type="ChEBI" id="CHEBI:30616"/>
        <dbReference type="ChEBI" id="CHEBI:57566"/>
        <dbReference type="ChEBI" id="CHEBI:58593"/>
        <dbReference type="ChEBI" id="CHEBI:456216"/>
        <dbReference type="EC" id="2.7.4.25"/>
    </reaction>
</comment>
<comment type="subcellular location">
    <subcellularLocation>
        <location evidence="1">Cytoplasm</location>
    </subcellularLocation>
</comment>
<comment type="similarity">
    <text evidence="1">Belongs to the cytidylate kinase family. Type 1 subfamily.</text>
</comment>